<keyword id="KW-1185">Reference proteome</keyword>
<keyword id="KW-0687">Ribonucleoprotein</keyword>
<keyword id="KW-0689">Ribosomal protein</keyword>
<gene>
    <name evidence="1" type="primary">rplS</name>
    <name type="ordered locus">MARTH_orf247</name>
</gene>
<evidence type="ECO:0000255" key="1">
    <source>
        <dbReference type="HAMAP-Rule" id="MF_00402"/>
    </source>
</evidence>
<evidence type="ECO:0000305" key="2"/>
<accession>B3PMA3</accession>
<protein>
    <recommendedName>
        <fullName evidence="1">Large ribosomal subunit protein bL19</fullName>
    </recommendedName>
    <alternativeName>
        <fullName evidence="2">50S ribosomal protein L19</fullName>
    </alternativeName>
</protein>
<organism>
    <name type="scientific">Metamycoplasma arthritidis (strain 158L3-1)</name>
    <name type="common">Mycoplasma arthritidis</name>
    <dbReference type="NCBI Taxonomy" id="243272"/>
    <lineage>
        <taxon>Bacteria</taxon>
        <taxon>Bacillati</taxon>
        <taxon>Mycoplasmatota</taxon>
        <taxon>Mycoplasmoidales</taxon>
        <taxon>Metamycoplasmataceae</taxon>
        <taxon>Metamycoplasma</taxon>
    </lineage>
</organism>
<proteinExistence type="inferred from homology"/>
<dbReference type="EMBL" id="CP001047">
    <property type="protein sequence ID" value="ACF07155.1"/>
    <property type="molecule type" value="Genomic_DNA"/>
</dbReference>
<dbReference type="RefSeq" id="WP_012498112.1">
    <property type="nucleotide sequence ID" value="NC_011025.1"/>
</dbReference>
<dbReference type="SMR" id="B3PMA3"/>
<dbReference type="STRING" id="243272.MARTH_orf247"/>
<dbReference type="KEGG" id="mat:MARTH_orf247"/>
<dbReference type="eggNOG" id="COG0335">
    <property type="taxonomic scope" value="Bacteria"/>
</dbReference>
<dbReference type="HOGENOM" id="CLU_103507_2_2_14"/>
<dbReference type="Proteomes" id="UP000008812">
    <property type="component" value="Chromosome"/>
</dbReference>
<dbReference type="GO" id="GO:0022625">
    <property type="term" value="C:cytosolic large ribosomal subunit"/>
    <property type="evidence" value="ECO:0007669"/>
    <property type="project" value="TreeGrafter"/>
</dbReference>
<dbReference type="GO" id="GO:0003735">
    <property type="term" value="F:structural constituent of ribosome"/>
    <property type="evidence" value="ECO:0007669"/>
    <property type="project" value="InterPro"/>
</dbReference>
<dbReference type="GO" id="GO:0006412">
    <property type="term" value="P:translation"/>
    <property type="evidence" value="ECO:0007669"/>
    <property type="project" value="UniProtKB-UniRule"/>
</dbReference>
<dbReference type="Gene3D" id="2.30.30.790">
    <property type="match status" value="1"/>
</dbReference>
<dbReference type="HAMAP" id="MF_00402">
    <property type="entry name" value="Ribosomal_bL19"/>
    <property type="match status" value="1"/>
</dbReference>
<dbReference type="InterPro" id="IPR001857">
    <property type="entry name" value="Ribosomal_bL19"/>
</dbReference>
<dbReference type="InterPro" id="IPR018257">
    <property type="entry name" value="Ribosomal_bL19_CS"/>
</dbReference>
<dbReference type="InterPro" id="IPR038657">
    <property type="entry name" value="Ribosomal_bL19_sf"/>
</dbReference>
<dbReference type="InterPro" id="IPR008991">
    <property type="entry name" value="Translation_prot_SH3-like_sf"/>
</dbReference>
<dbReference type="NCBIfam" id="TIGR01024">
    <property type="entry name" value="rplS_bact"/>
    <property type="match status" value="1"/>
</dbReference>
<dbReference type="PANTHER" id="PTHR15680:SF9">
    <property type="entry name" value="LARGE RIBOSOMAL SUBUNIT PROTEIN BL19M"/>
    <property type="match status" value="1"/>
</dbReference>
<dbReference type="PANTHER" id="PTHR15680">
    <property type="entry name" value="RIBOSOMAL PROTEIN L19"/>
    <property type="match status" value="1"/>
</dbReference>
<dbReference type="Pfam" id="PF01245">
    <property type="entry name" value="Ribosomal_L19"/>
    <property type="match status" value="1"/>
</dbReference>
<dbReference type="PIRSF" id="PIRSF002191">
    <property type="entry name" value="Ribosomal_L19"/>
    <property type="match status" value="1"/>
</dbReference>
<dbReference type="PRINTS" id="PR00061">
    <property type="entry name" value="RIBOSOMALL19"/>
</dbReference>
<dbReference type="SUPFAM" id="SSF50104">
    <property type="entry name" value="Translation proteins SH3-like domain"/>
    <property type="match status" value="1"/>
</dbReference>
<dbReference type="PROSITE" id="PS01015">
    <property type="entry name" value="RIBOSOMAL_L19"/>
    <property type="match status" value="1"/>
</dbReference>
<sequence>MRTKLLELVEKDQIRTDLPEIREGYNVKVHVRIKEGNKERIQVFEGLVIASYGTGINKSITVRKDSYGVGVERIFKLNSPLIAHIEVTRINKVRRAKLYYMRDLKGKSARLKEIKKAK</sequence>
<name>RL19_META1</name>
<feature type="chain" id="PRO_1000123342" description="Large ribosomal subunit protein bL19">
    <location>
        <begin position="1"/>
        <end position="118"/>
    </location>
</feature>
<reference key="1">
    <citation type="journal article" date="2008" name="Infect. Immun.">
        <title>Genome of Mycoplasma arthritidis.</title>
        <authorList>
            <person name="Dybvig K."/>
            <person name="Zuhua C."/>
            <person name="Lao P."/>
            <person name="Jordan D.S."/>
            <person name="French C.T."/>
            <person name="Tu A.H."/>
            <person name="Loraine A.E."/>
        </authorList>
    </citation>
    <scope>NUCLEOTIDE SEQUENCE [LARGE SCALE GENOMIC DNA]</scope>
    <source>
        <strain>158L3-1</strain>
    </source>
</reference>
<comment type="function">
    <text evidence="1">This protein is located at the 30S-50S ribosomal subunit interface and may play a role in the structure and function of the aminoacyl-tRNA binding site.</text>
</comment>
<comment type="similarity">
    <text evidence="1">Belongs to the bacterial ribosomal protein bL19 family.</text>
</comment>